<comment type="function">
    <text evidence="1">Binds to the 23S rRNA.</text>
</comment>
<comment type="similarity">
    <text evidence="1">Belongs to the bacterial ribosomal protein bL9 family.</text>
</comment>
<dbReference type="EMBL" id="AE014299">
    <property type="protein sequence ID" value="AAN56902.1"/>
    <property type="molecule type" value="Genomic_DNA"/>
</dbReference>
<dbReference type="RefSeq" id="NP_719458.1">
    <property type="nucleotide sequence ID" value="NC_004347.2"/>
</dbReference>
<dbReference type="RefSeq" id="WP_011073672.1">
    <property type="nucleotide sequence ID" value="NC_004347.2"/>
</dbReference>
<dbReference type="SMR" id="Q8EAH5"/>
<dbReference type="STRING" id="211586.SO_3927"/>
<dbReference type="PaxDb" id="211586-SO_3927"/>
<dbReference type="KEGG" id="son:SO_3927"/>
<dbReference type="PATRIC" id="fig|211586.12.peg.3811"/>
<dbReference type="eggNOG" id="COG0359">
    <property type="taxonomic scope" value="Bacteria"/>
</dbReference>
<dbReference type="HOGENOM" id="CLU_078938_4_1_6"/>
<dbReference type="OrthoDB" id="9788336at2"/>
<dbReference type="PhylomeDB" id="Q8EAH5"/>
<dbReference type="BioCyc" id="SONE211586:G1GMP-3645-MONOMER"/>
<dbReference type="Proteomes" id="UP000008186">
    <property type="component" value="Chromosome"/>
</dbReference>
<dbReference type="GO" id="GO:0022625">
    <property type="term" value="C:cytosolic large ribosomal subunit"/>
    <property type="evidence" value="ECO:0000318"/>
    <property type="project" value="GO_Central"/>
</dbReference>
<dbReference type="GO" id="GO:0019843">
    <property type="term" value="F:rRNA binding"/>
    <property type="evidence" value="ECO:0007669"/>
    <property type="project" value="UniProtKB-UniRule"/>
</dbReference>
<dbReference type="GO" id="GO:0003735">
    <property type="term" value="F:structural constituent of ribosome"/>
    <property type="evidence" value="ECO:0007669"/>
    <property type="project" value="InterPro"/>
</dbReference>
<dbReference type="GO" id="GO:0006412">
    <property type="term" value="P:translation"/>
    <property type="evidence" value="ECO:0007669"/>
    <property type="project" value="UniProtKB-UniRule"/>
</dbReference>
<dbReference type="FunFam" id="3.10.430.100:FF:000001">
    <property type="entry name" value="50S ribosomal protein L9"/>
    <property type="match status" value="1"/>
</dbReference>
<dbReference type="FunFam" id="3.40.5.10:FF:000001">
    <property type="entry name" value="50S ribosomal protein L9"/>
    <property type="match status" value="1"/>
</dbReference>
<dbReference type="Gene3D" id="3.10.430.100">
    <property type="entry name" value="Ribosomal protein L9, C-terminal domain"/>
    <property type="match status" value="1"/>
</dbReference>
<dbReference type="Gene3D" id="3.40.5.10">
    <property type="entry name" value="Ribosomal protein L9, N-terminal domain"/>
    <property type="match status" value="1"/>
</dbReference>
<dbReference type="HAMAP" id="MF_00503">
    <property type="entry name" value="Ribosomal_bL9"/>
    <property type="match status" value="1"/>
</dbReference>
<dbReference type="InterPro" id="IPR000244">
    <property type="entry name" value="Ribosomal_bL9"/>
</dbReference>
<dbReference type="InterPro" id="IPR009027">
    <property type="entry name" value="Ribosomal_bL9/RNase_H1_N"/>
</dbReference>
<dbReference type="InterPro" id="IPR020594">
    <property type="entry name" value="Ribosomal_bL9_bac/chp"/>
</dbReference>
<dbReference type="InterPro" id="IPR020069">
    <property type="entry name" value="Ribosomal_bL9_C"/>
</dbReference>
<dbReference type="InterPro" id="IPR036791">
    <property type="entry name" value="Ribosomal_bL9_C_sf"/>
</dbReference>
<dbReference type="InterPro" id="IPR020070">
    <property type="entry name" value="Ribosomal_bL9_N"/>
</dbReference>
<dbReference type="InterPro" id="IPR036935">
    <property type="entry name" value="Ribosomal_bL9_N_sf"/>
</dbReference>
<dbReference type="NCBIfam" id="TIGR00158">
    <property type="entry name" value="L9"/>
    <property type="match status" value="1"/>
</dbReference>
<dbReference type="PANTHER" id="PTHR21368">
    <property type="entry name" value="50S RIBOSOMAL PROTEIN L9"/>
    <property type="match status" value="1"/>
</dbReference>
<dbReference type="Pfam" id="PF03948">
    <property type="entry name" value="Ribosomal_L9_C"/>
    <property type="match status" value="1"/>
</dbReference>
<dbReference type="Pfam" id="PF01281">
    <property type="entry name" value="Ribosomal_L9_N"/>
    <property type="match status" value="1"/>
</dbReference>
<dbReference type="SUPFAM" id="SSF55658">
    <property type="entry name" value="L9 N-domain-like"/>
    <property type="match status" value="1"/>
</dbReference>
<dbReference type="SUPFAM" id="SSF55653">
    <property type="entry name" value="Ribosomal protein L9 C-domain"/>
    <property type="match status" value="1"/>
</dbReference>
<dbReference type="PROSITE" id="PS00651">
    <property type="entry name" value="RIBOSOMAL_L9"/>
    <property type="match status" value="1"/>
</dbReference>
<evidence type="ECO:0000255" key="1">
    <source>
        <dbReference type="HAMAP-Rule" id="MF_00503"/>
    </source>
</evidence>
<evidence type="ECO:0000305" key="2"/>
<reference key="1">
    <citation type="journal article" date="2002" name="Nat. Biotechnol.">
        <title>Genome sequence of the dissimilatory metal ion-reducing bacterium Shewanella oneidensis.</title>
        <authorList>
            <person name="Heidelberg J.F."/>
            <person name="Paulsen I.T."/>
            <person name="Nelson K.E."/>
            <person name="Gaidos E.J."/>
            <person name="Nelson W.C."/>
            <person name="Read T.D."/>
            <person name="Eisen J.A."/>
            <person name="Seshadri R."/>
            <person name="Ward N.L."/>
            <person name="Methe B.A."/>
            <person name="Clayton R.A."/>
            <person name="Meyer T."/>
            <person name="Tsapin A."/>
            <person name="Scott J."/>
            <person name="Beanan M.J."/>
            <person name="Brinkac L.M."/>
            <person name="Daugherty S.C."/>
            <person name="DeBoy R.T."/>
            <person name="Dodson R.J."/>
            <person name="Durkin A.S."/>
            <person name="Haft D.H."/>
            <person name="Kolonay J.F."/>
            <person name="Madupu R."/>
            <person name="Peterson J.D."/>
            <person name="Umayam L.A."/>
            <person name="White O."/>
            <person name="Wolf A.M."/>
            <person name="Vamathevan J.J."/>
            <person name="Weidman J.F."/>
            <person name="Impraim M."/>
            <person name="Lee K."/>
            <person name="Berry K.J."/>
            <person name="Lee C."/>
            <person name="Mueller J."/>
            <person name="Khouri H.M."/>
            <person name="Gill J."/>
            <person name="Utterback T.R."/>
            <person name="McDonald L.A."/>
            <person name="Feldblyum T.V."/>
            <person name="Smith H.O."/>
            <person name="Venter J.C."/>
            <person name="Nealson K.H."/>
            <person name="Fraser C.M."/>
        </authorList>
    </citation>
    <scope>NUCLEOTIDE SEQUENCE [LARGE SCALE GENOMIC DNA]</scope>
    <source>
        <strain>ATCC 700550 / JCM 31522 / CIP 106686 / LMG 19005 / NCIMB 14063 / MR-1</strain>
    </source>
</reference>
<protein>
    <recommendedName>
        <fullName evidence="1">Large ribosomal subunit protein bL9</fullName>
    </recommendedName>
    <alternativeName>
        <fullName evidence="2">50S ribosomal protein L9</fullName>
    </alternativeName>
</protein>
<sequence length="150" mass="15662">MNVILLDKIANLGNLGDQVAVKAGYARNYLLPQGKAVVANESNVKVFEARRAELEAKLAADLAAANQRAEKIAALEAVVIASKAGDEGKLFGSVGNRDIADAVTAAGVELAKSEVRLPLGALRTTGDFEVEVQLHTEVKAVVKVSIVAEA</sequence>
<name>RL9_SHEON</name>
<organism>
    <name type="scientific">Shewanella oneidensis (strain ATCC 700550 / JCM 31522 / CIP 106686 / LMG 19005 / NCIMB 14063 / MR-1)</name>
    <dbReference type="NCBI Taxonomy" id="211586"/>
    <lineage>
        <taxon>Bacteria</taxon>
        <taxon>Pseudomonadati</taxon>
        <taxon>Pseudomonadota</taxon>
        <taxon>Gammaproteobacteria</taxon>
        <taxon>Alteromonadales</taxon>
        <taxon>Shewanellaceae</taxon>
        <taxon>Shewanella</taxon>
    </lineage>
</organism>
<proteinExistence type="inferred from homology"/>
<feature type="chain" id="PRO_0000236584" description="Large ribosomal subunit protein bL9">
    <location>
        <begin position="1"/>
        <end position="150"/>
    </location>
</feature>
<keyword id="KW-1185">Reference proteome</keyword>
<keyword id="KW-0687">Ribonucleoprotein</keyword>
<keyword id="KW-0689">Ribosomal protein</keyword>
<keyword id="KW-0694">RNA-binding</keyword>
<keyword id="KW-0699">rRNA-binding</keyword>
<gene>
    <name evidence="1" type="primary">rplI</name>
    <name type="ordered locus">SO_3927</name>
</gene>
<accession>Q8EAH5</accession>